<sequence>MIPGMRATPTESFSFVYSCDLQTNVQVKVAEFEGIFRDVLNPVRRLNQLFAEITVYCNNQQIGYPVCTSFHTPPDSSQLARQKLIQKWNEWLTLPIRYSDLSRDAFLHITIWEHEDDEIVNNSTFSRRLVAQSKLSMFSKRGILKSGVIDVQMNVSTTPDPFVKQPETWKYSDAWGDEIDLLFKQVTRQSRGLVEDVPWLDPFASRRIEMIRAKYKYSSPDRHVFLVLEMAAIRLGPTFYKVVYYEDETKNMRVSTSVNGGVGIVSACTRYCVADPELLLESLAEVKHSAMTRRIRDVEDERHRQVKPNKQAKDRLETIVNLPSSQVLTREQRDLVWKFRHYLRQFPKALNKYLRSVNWVHPQEVKTALALMNDWELIEAEDALELLSSAFTHPAVRAYSVSRLLEAASPEQVLLYLPQLVQALKYEQGQQLPEEGNPVPVVSEEEGKIPSVATTPTEELEGRDMTVVTKKEARKAASGDLATFLIDYALASPKVSNYLYWHLKTEIESTKESKEEHSKMYQNIQDRLMEALVKRPDTRAQVDSLHQQQIFVEDLIILMNEAKARGGRLNESKSAEFRTMLSRAKHMLDLKGVHLPLDPSFRLSSVIPDTASFFKSEMMPAKISFKVLQPNGKADRNIPEEYTVIFKTGDDLRQDQLIQQMVRLIDIILKKGQLDLKLTPYLVLSTGVGQGFVQCIKSKPLRAIQEQYKAHKMDCIREAMKELRPGDGPFGIEPNVIDNYVRSLAGYSVIMYILGLGDRHLDNLLLCENGKLFHVDFGFILGRDPKPMPPPMKLTSEMVQVMGGVKSKQFLEFVQHVDSAYRILRRHSNVLLNLFSLMLDAGIPDIAAEPDKAIFKIEQRLRLDLSDEAATKHIFTQIESSLNAKMAMISDIIHAYKQNLM</sequence>
<comment type="function">
    <text evidence="6 7 8 9 10 11 13">Catalytic subunit of the PI3K complex that mediates formation of phosphatidylinositol 3-phosphate (PubMed:11927551). Together with bec-1, mediates the production of phosphatidylinositol 3-phosphate on intracellular vesicles and thereby regulates membrane trafficking (PubMed:11927551, PubMed:16111945). Plays a role in endosome-to-Golgi retrograde transport of mig-14 (PubMed:21183797). Involved in clearance of apoptotic cell corpses by phagosomes (PubMed:22272187). Phagosome maturation requires two sequential and non-overlapping pulses of phosphatidylinositol-3-phosphate (PI3P) on the vesicle surface which mediates recruitment of sortins snx-1 and lst-4 and small GTPases rab-5, rab-2 and rab-7, downstream of dynamin dyn-1 (PubMed:18425118, PubMed:22272187). The first pulse is initiated by piki-1, then maintained by vps-34 which also produces the second pulse (PubMed:22272187). Required for embryonic development (PubMed:22272187). Together with bec-1, involved in L3/L4 larval molting stage probably by regulating cuticle shedding (PubMed:11927551). Regulates the expansion of the nucleus outer membrane (PubMed:11927551). Involved in the secretion and localization of lrp-1 at the apical surface of hyp7 syncytium (PubMed:16111945). May regulate endocytosis in hypodermal cells (PubMed:11927551). May play a role in the formation of gut granules (a lysosome-related organelle) (PubMed:15843430). Plays a role in germ stem cell proliferation during larval development (PubMed:28285998).</text>
</comment>
<comment type="catalytic activity">
    <reaction evidence="2 6">
        <text>a 1,2-diacyl-sn-glycero-3-phospho-(1D-myo-inositol) + ATP = a 1,2-diacyl-sn-glycero-3-phospho-(1D-myo-inositol-3-phosphate) + ADP + H(+)</text>
        <dbReference type="Rhea" id="RHEA:12709"/>
        <dbReference type="ChEBI" id="CHEBI:15378"/>
        <dbReference type="ChEBI" id="CHEBI:30616"/>
        <dbReference type="ChEBI" id="CHEBI:57880"/>
        <dbReference type="ChEBI" id="CHEBI:58088"/>
        <dbReference type="ChEBI" id="CHEBI:456216"/>
        <dbReference type="EC" id="2.7.1.137"/>
    </reaction>
</comment>
<comment type="cofactor">
    <cofactor evidence="6">
        <name>Mn(2+)</name>
        <dbReference type="ChEBI" id="CHEBI:29035"/>
    </cofactor>
</comment>
<comment type="activity regulation">
    <text evidence="6">Inhibited by wortmannin.</text>
</comment>
<comment type="subunit">
    <text evidence="8 12 15">Interacts with bec-1 (PubMed:16111945, PubMed:26783301). May interact with dyn-1 (PubMed:18425118).</text>
</comment>
<comment type="interaction">
    <interactant intactId="EBI-21398789">
        <id>Q9TXI7</id>
    </interactant>
    <interactant intactId="EBI-2413500">
        <id>Q22592</id>
        <label>bec-1</label>
    </interactant>
    <organismsDiffer>false</organismsDiffer>
    <experiments>2</experiments>
</comment>
<comment type="subcellular location">
    <subcellularLocation>
        <location evidence="6">Nucleus outer membrane</location>
        <topology evidence="6">Peripheral membrane protein</topology>
    </subcellularLocation>
    <subcellularLocation>
        <location evidence="6">Cytoplasm</location>
    </subcellularLocation>
    <subcellularLocation>
        <location evidence="6">Cytoplasmic granule</location>
    </subcellularLocation>
    <subcellularLocation>
        <location evidence="9">Cell projection</location>
        <location evidence="9">Phagocytic cup</location>
    </subcellularLocation>
    <text evidence="9">Colocalizes with rab-5 and dyn-1 at the phagocytic cup.</text>
</comment>
<comment type="alternative products">
    <event type="alternative splicing"/>
    <isoform>
        <id>Q9TXI7-1</id>
        <name evidence="18">a</name>
        <sequence type="displayed"/>
    </isoform>
    <isoform>
        <id>Q9TXI7-3</id>
        <name evidence="19">c</name>
        <sequence type="described" ref="VSP_058341"/>
    </isoform>
</comment>
<comment type="tissue specificity">
    <text evidence="6">Ubiquitous.</text>
</comment>
<comment type="developmental stage">
    <text evidence="6">Highly expressed in embryos and at L2 larval stage, and to a lower extent in subsequent larval stages and in adults.</text>
</comment>
<comment type="disruption phenotype">
    <text evidence="9 10 11 13">RNAi-mediated knockdown causes a defect in the clearance of apoptotic cell corpses in gonads, a loss of rab-5 recruitment to cell corpse-containing nascent phagosomes and a decrease in PI3P levels on phagosome membranes (PubMed:18425118, PubMed:22272187). In addition, causes a reduction in mig-14 and rme-8 association with puncta structures as well as an increase in mig-14 protein levels (PubMed:21183797). RNAi-mediated knockdown results in reduced germ stem cell proliferation during larval development (PubMed:28285998).</text>
</comment>
<comment type="similarity">
    <text evidence="2">Belongs to the PI3/PI4-kinase family.</text>
</comment>
<proteinExistence type="evidence at protein level"/>
<dbReference type="EC" id="2.7.1.137" evidence="2 6"/>
<dbReference type="EMBL" id="Y12543">
    <property type="protein sequence ID" value="CAA73142.1"/>
    <property type="molecule type" value="mRNA"/>
</dbReference>
<dbReference type="EMBL" id="BX284601">
    <property type="protein sequence ID" value="CCD61194.1"/>
    <property type="molecule type" value="Genomic_DNA"/>
</dbReference>
<dbReference type="EMBL" id="BX284601">
    <property type="protein sequence ID" value="CCD61196.1"/>
    <property type="molecule type" value="Genomic_DNA"/>
</dbReference>
<dbReference type="PIR" id="T43628">
    <property type="entry name" value="T43628"/>
</dbReference>
<dbReference type="RefSeq" id="NP_001020954.1">
    <property type="nucleotide sequence ID" value="NM_001025783.2"/>
</dbReference>
<dbReference type="RefSeq" id="NP_001367304.1">
    <molecule id="Q9TXI7-3"/>
    <property type="nucleotide sequence ID" value="NM_001380450.1"/>
</dbReference>
<dbReference type="RefSeq" id="NP_491741.1">
    <molecule id="Q9TXI7-1"/>
    <property type="nucleotide sequence ID" value="NM_059340.6"/>
</dbReference>
<dbReference type="SMR" id="Q9TXI7"/>
<dbReference type="FunCoup" id="Q9TXI7">
    <property type="interactions" value="3059"/>
</dbReference>
<dbReference type="IntAct" id="Q9TXI7">
    <property type="interactions" value="1"/>
</dbReference>
<dbReference type="STRING" id="6239.B0025.1a.1"/>
<dbReference type="PaxDb" id="6239-B0025.1a"/>
<dbReference type="PeptideAtlas" id="Q9TXI7"/>
<dbReference type="EnsemblMetazoa" id="B0025.1a.1">
    <molecule id="Q9TXI7-1"/>
    <property type="protein sequence ID" value="B0025.1a.1"/>
    <property type="gene ID" value="WBGene00006932"/>
</dbReference>
<dbReference type="EnsemblMetazoa" id="B0025.1c.1">
    <molecule id="Q9TXI7-3"/>
    <property type="protein sequence ID" value="B0025.1c.1"/>
    <property type="gene ID" value="WBGene00006932"/>
</dbReference>
<dbReference type="GeneID" id="172280"/>
<dbReference type="KEGG" id="cel:CELE_B0025.1"/>
<dbReference type="UCSC" id="B0025.1b.2">
    <property type="organism name" value="c. elegans"/>
</dbReference>
<dbReference type="AGR" id="WB:WBGene00006932"/>
<dbReference type="CTD" id="172280"/>
<dbReference type="WormBase" id="B0025.1a">
    <molecule id="Q9TXI7-1"/>
    <property type="protein sequence ID" value="CE24759"/>
    <property type="gene ID" value="WBGene00006932"/>
    <property type="gene designation" value="vps-34"/>
</dbReference>
<dbReference type="WormBase" id="B0025.1c">
    <molecule id="Q9TXI7-3"/>
    <property type="protein sequence ID" value="CE37691"/>
    <property type="gene ID" value="WBGene00006932"/>
    <property type="gene designation" value="vps-34"/>
</dbReference>
<dbReference type="eggNOG" id="KOG0906">
    <property type="taxonomic scope" value="Eukaryota"/>
</dbReference>
<dbReference type="GeneTree" id="ENSGT00940000156943"/>
<dbReference type="HOGENOM" id="CLU_004869_0_0_1"/>
<dbReference type="InParanoid" id="Q9TXI7"/>
<dbReference type="OMA" id="LHKFAQY"/>
<dbReference type="OrthoDB" id="67688at2759"/>
<dbReference type="PhylomeDB" id="Q9TXI7"/>
<dbReference type="Reactome" id="R-CEL-1632852">
    <property type="pathway name" value="Macroautophagy"/>
</dbReference>
<dbReference type="Reactome" id="R-CEL-1660514">
    <property type="pathway name" value="Synthesis of PIPs at the Golgi membrane"/>
</dbReference>
<dbReference type="Reactome" id="R-CEL-1660516">
    <property type="pathway name" value="Synthesis of PIPs at the early endosome membrane"/>
</dbReference>
<dbReference type="Reactome" id="R-CEL-1660517">
    <property type="pathway name" value="Synthesis of PIPs at the late endosome membrane"/>
</dbReference>
<dbReference type="Reactome" id="R-CEL-5668599">
    <property type="pathway name" value="RHO GTPases Activate NADPH Oxidases"/>
</dbReference>
<dbReference type="PRO" id="PR:Q9TXI7"/>
<dbReference type="Proteomes" id="UP000001940">
    <property type="component" value="Chromosome I"/>
</dbReference>
<dbReference type="Bgee" id="WBGene00006932">
    <property type="expression patterns" value="Expressed in pharyngeal muscle cell (C elegans) and 4 other cell types or tissues"/>
</dbReference>
<dbReference type="GO" id="GO:0042995">
    <property type="term" value="C:cell projection"/>
    <property type="evidence" value="ECO:0007669"/>
    <property type="project" value="UniProtKB-KW"/>
</dbReference>
<dbReference type="GO" id="GO:0005737">
    <property type="term" value="C:cytoplasm"/>
    <property type="evidence" value="ECO:0000314"/>
    <property type="project" value="WormBase"/>
</dbReference>
<dbReference type="GO" id="GO:0005768">
    <property type="term" value="C:endosome"/>
    <property type="evidence" value="ECO:0000318"/>
    <property type="project" value="GO_Central"/>
</dbReference>
<dbReference type="GO" id="GO:0016020">
    <property type="term" value="C:membrane"/>
    <property type="evidence" value="ECO:0000318"/>
    <property type="project" value="GO_Central"/>
</dbReference>
<dbReference type="GO" id="GO:0005640">
    <property type="term" value="C:nuclear outer membrane"/>
    <property type="evidence" value="ECO:0000314"/>
    <property type="project" value="WormBase"/>
</dbReference>
<dbReference type="GO" id="GO:0005730">
    <property type="term" value="C:nucleolus"/>
    <property type="evidence" value="ECO:0000314"/>
    <property type="project" value="WormBase"/>
</dbReference>
<dbReference type="GO" id="GO:0005777">
    <property type="term" value="C:peroxisome"/>
    <property type="evidence" value="ECO:0000318"/>
    <property type="project" value="GO_Central"/>
</dbReference>
<dbReference type="GO" id="GO:0001891">
    <property type="term" value="C:phagocytic cup"/>
    <property type="evidence" value="ECO:0007669"/>
    <property type="project" value="UniProtKB-SubCell"/>
</dbReference>
<dbReference type="GO" id="GO:0000407">
    <property type="term" value="C:phagophore assembly site"/>
    <property type="evidence" value="ECO:0000318"/>
    <property type="project" value="GO_Central"/>
</dbReference>
<dbReference type="GO" id="GO:0034271">
    <property type="term" value="C:phosphatidylinositol 3-kinase complex, class III, type I"/>
    <property type="evidence" value="ECO:0000318"/>
    <property type="project" value="GO_Central"/>
</dbReference>
<dbReference type="GO" id="GO:0034272">
    <property type="term" value="C:phosphatidylinositol 3-kinase complex, class III, type II"/>
    <property type="evidence" value="ECO:0000318"/>
    <property type="project" value="GO_Central"/>
</dbReference>
<dbReference type="GO" id="GO:0016303">
    <property type="term" value="F:1-phosphatidylinositol-3-kinase activity"/>
    <property type="evidence" value="ECO:0000314"/>
    <property type="project" value="WormBase"/>
</dbReference>
<dbReference type="GO" id="GO:0005524">
    <property type="term" value="F:ATP binding"/>
    <property type="evidence" value="ECO:0007669"/>
    <property type="project" value="UniProtKB-KW"/>
</dbReference>
<dbReference type="GO" id="GO:0000045">
    <property type="term" value="P:autophagosome assembly"/>
    <property type="evidence" value="ECO:0000318"/>
    <property type="project" value="GO_Central"/>
</dbReference>
<dbReference type="GO" id="GO:0008340">
    <property type="term" value="P:determination of adult lifespan"/>
    <property type="evidence" value="ECO:0000316"/>
    <property type="project" value="WormBase"/>
</dbReference>
<dbReference type="GO" id="GO:0042395">
    <property type="term" value="P:ecdysis, collagen and cuticulin-based cuticle"/>
    <property type="evidence" value="ECO:0000315"/>
    <property type="project" value="WormBase"/>
</dbReference>
<dbReference type="GO" id="GO:0006897">
    <property type="term" value="P:endocytosis"/>
    <property type="evidence" value="ECO:0000318"/>
    <property type="project" value="GO_Central"/>
</dbReference>
<dbReference type="GO" id="GO:0002119">
    <property type="term" value="P:nematode larval development"/>
    <property type="evidence" value="ECO:0000315"/>
    <property type="project" value="WormBase"/>
</dbReference>
<dbReference type="GO" id="GO:0006998">
    <property type="term" value="P:nuclear envelope organization"/>
    <property type="evidence" value="ECO:0000315"/>
    <property type="project" value="WormBase"/>
</dbReference>
<dbReference type="GO" id="GO:0000425">
    <property type="term" value="P:pexophagy"/>
    <property type="evidence" value="ECO:0000318"/>
    <property type="project" value="GO_Central"/>
</dbReference>
<dbReference type="GO" id="GO:0090386">
    <property type="term" value="P:phagosome maturation involved in apoptotic cell clearance"/>
    <property type="evidence" value="ECO:0000315"/>
    <property type="project" value="WormBase"/>
</dbReference>
<dbReference type="GO" id="GO:0036092">
    <property type="term" value="P:phosphatidylinositol-3-phosphate biosynthetic process"/>
    <property type="evidence" value="ECO:0000314"/>
    <property type="project" value="WormBase"/>
</dbReference>
<dbReference type="GO" id="GO:0048015">
    <property type="term" value="P:phosphatidylinositol-mediated signaling"/>
    <property type="evidence" value="ECO:0000318"/>
    <property type="project" value="GO_Central"/>
</dbReference>
<dbReference type="GO" id="GO:1901076">
    <property type="term" value="P:positive regulation of engulfment of apoptotic cell"/>
    <property type="evidence" value="ECO:0000315"/>
    <property type="project" value="WormBase"/>
</dbReference>
<dbReference type="GO" id="GO:0030100">
    <property type="term" value="P:regulation of endocytosis"/>
    <property type="evidence" value="ECO:0000315"/>
    <property type="project" value="WormBase"/>
</dbReference>
<dbReference type="GO" id="GO:0051036">
    <property type="term" value="P:regulation of endosome size"/>
    <property type="evidence" value="ECO:0000316"/>
    <property type="project" value="UniProtKB"/>
</dbReference>
<dbReference type="GO" id="GO:0050708">
    <property type="term" value="P:regulation of protein secretion"/>
    <property type="evidence" value="ECO:0000315"/>
    <property type="project" value="WormBase"/>
</dbReference>
<dbReference type="GO" id="GO:0022414">
    <property type="term" value="P:reproductive process"/>
    <property type="evidence" value="ECO:0000315"/>
    <property type="project" value="WormBase"/>
</dbReference>
<dbReference type="CDD" id="cd08397">
    <property type="entry name" value="C2_PI3K_class_III"/>
    <property type="match status" value="1"/>
</dbReference>
<dbReference type="CDD" id="cd00870">
    <property type="entry name" value="PI3Ka_III"/>
    <property type="match status" value="1"/>
</dbReference>
<dbReference type="CDD" id="cd00896">
    <property type="entry name" value="PI3Kc_III"/>
    <property type="match status" value="1"/>
</dbReference>
<dbReference type="FunFam" id="1.10.1070.11:FF:000002">
    <property type="entry name" value="Phosphatidylinositol 3-kinase catalytic subunit type 3"/>
    <property type="match status" value="1"/>
</dbReference>
<dbReference type="FunFam" id="3.30.1010.10:FF:000016">
    <property type="entry name" value="Phosphatidylinositol 3-kinase catalytic subunit type 3"/>
    <property type="match status" value="1"/>
</dbReference>
<dbReference type="Gene3D" id="2.60.40.150">
    <property type="entry name" value="C2 domain"/>
    <property type="match status" value="1"/>
</dbReference>
<dbReference type="Gene3D" id="1.10.1070.11">
    <property type="entry name" value="Phosphatidylinositol 3-/4-kinase, catalytic domain"/>
    <property type="match status" value="1"/>
</dbReference>
<dbReference type="Gene3D" id="3.30.1010.10">
    <property type="entry name" value="Phosphatidylinositol 3-kinase Catalytic Subunit, Chain A, domain 4"/>
    <property type="match status" value="1"/>
</dbReference>
<dbReference type="Gene3D" id="1.25.40.70">
    <property type="entry name" value="Phosphatidylinositol 3-kinase, accessory domain (PIK)"/>
    <property type="match status" value="1"/>
</dbReference>
<dbReference type="InterPro" id="IPR016024">
    <property type="entry name" value="ARM-type_fold"/>
</dbReference>
<dbReference type="InterPro" id="IPR035892">
    <property type="entry name" value="C2_domain_sf"/>
</dbReference>
<dbReference type="InterPro" id="IPR011009">
    <property type="entry name" value="Kinase-like_dom_sf"/>
</dbReference>
<dbReference type="InterPro" id="IPR000403">
    <property type="entry name" value="PI3/4_kinase_cat_dom"/>
</dbReference>
<dbReference type="InterPro" id="IPR036940">
    <property type="entry name" value="PI3/4_kinase_cat_sf"/>
</dbReference>
<dbReference type="InterPro" id="IPR018936">
    <property type="entry name" value="PI3/4_kinase_CS"/>
</dbReference>
<dbReference type="InterPro" id="IPR002420">
    <property type="entry name" value="PI3K-type_C2_dom"/>
</dbReference>
<dbReference type="InterPro" id="IPR001263">
    <property type="entry name" value="PI3K_accessory_dom"/>
</dbReference>
<dbReference type="InterPro" id="IPR042236">
    <property type="entry name" value="PI3K_accessory_sf"/>
</dbReference>
<dbReference type="InterPro" id="IPR008290">
    <property type="entry name" value="PI3K_Vps34"/>
</dbReference>
<dbReference type="InterPro" id="IPR015433">
    <property type="entry name" value="PI_Kinase"/>
</dbReference>
<dbReference type="PANTHER" id="PTHR10048:SF7">
    <property type="entry name" value="PHOSPHATIDYLINOSITOL 3-KINASE CATALYTIC SUBUNIT TYPE 3"/>
    <property type="match status" value="1"/>
</dbReference>
<dbReference type="PANTHER" id="PTHR10048">
    <property type="entry name" value="PHOSPHATIDYLINOSITOL KINASE"/>
    <property type="match status" value="1"/>
</dbReference>
<dbReference type="Pfam" id="PF00454">
    <property type="entry name" value="PI3_PI4_kinase"/>
    <property type="match status" value="1"/>
</dbReference>
<dbReference type="Pfam" id="PF00792">
    <property type="entry name" value="PI3K_C2"/>
    <property type="match status" value="1"/>
</dbReference>
<dbReference type="Pfam" id="PF00613">
    <property type="entry name" value="PI3Ka"/>
    <property type="match status" value="1"/>
</dbReference>
<dbReference type="PIRSF" id="PIRSF000587">
    <property type="entry name" value="PI3K_Vps34"/>
    <property type="match status" value="1"/>
</dbReference>
<dbReference type="SMART" id="SM00142">
    <property type="entry name" value="PI3K_C2"/>
    <property type="match status" value="1"/>
</dbReference>
<dbReference type="SMART" id="SM00145">
    <property type="entry name" value="PI3Ka"/>
    <property type="match status" value="1"/>
</dbReference>
<dbReference type="SMART" id="SM00146">
    <property type="entry name" value="PI3Kc"/>
    <property type="match status" value="1"/>
</dbReference>
<dbReference type="SUPFAM" id="SSF48371">
    <property type="entry name" value="ARM repeat"/>
    <property type="match status" value="1"/>
</dbReference>
<dbReference type="SUPFAM" id="SSF49562">
    <property type="entry name" value="C2 domain (Calcium/lipid-binding domain, CaLB)"/>
    <property type="match status" value="1"/>
</dbReference>
<dbReference type="SUPFAM" id="SSF56112">
    <property type="entry name" value="Protein kinase-like (PK-like)"/>
    <property type="match status" value="1"/>
</dbReference>
<dbReference type="PROSITE" id="PS51547">
    <property type="entry name" value="C2_PI3K"/>
    <property type="match status" value="1"/>
</dbReference>
<dbReference type="PROSITE" id="PS00915">
    <property type="entry name" value="PI3_4_KINASE_1"/>
    <property type="match status" value="1"/>
</dbReference>
<dbReference type="PROSITE" id="PS00916">
    <property type="entry name" value="PI3_4_KINASE_2"/>
    <property type="match status" value="1"/>
</dbReference>
<dbReference type="PROSITE" id="PS50290">
    <property type="entry name" value="PI3_4_KINASE_3"/>
    <property type="match status" value="1"/>
</dbReference>
<dbReference type="PROSITE" id="PS51545">
    <property type="entry name" value="PIK_HELICAL"/>
    <property type="match status" value="1"/>
</dbReference>
<accession>Q9TXI7</accession>
<accession>Q5TYK9</accession>
<accession>Q9TXI6</accession>
<accession>Q9XZR0</accession>
<reference evidence="16" key="1">
    <citation type="journal article" date="2002" name="EMBO J.">
        <title>Membrane transport in Caenorhabditis elegans: an essential role for VPS34 at the nuclear membrane.</title>
        <authorList>
            <person name="Roggo L."/>
            <person name="Bernard V."/>
            <person name="Kovacs A.L."/>
            <person name="Rose A.M."/>
            <person name="Savoy F."/>
            <person name="Zetka M."/>
            <person name="Wymann M.P."/>
            <person name="Mueller F."/>
        </authorList>
    </citation>
    <scope>NUCLEOTIDE SEQUENCE [MRNA] (ISOFORM C)</scope>
    <scope>FUNCTION</scope>
    <scope>CATALYTIC ACTIVITY</scope>
    <scope>COFACTOR</scope>
    <scope>ACTIVITY REGULATION</scope>
    <scope>SUBCELLULAR LOCATION</scope>
    <scope>TISSUE SPECIFICITY</scope>
    <scope>DEVELOPMENTAL STAGE</scope>
</reference>
<reference evidence="17" key="2">
    <citation type="journal article" date="1998" name="Science">
        <title>Genome sequence of the nematode C. elegans: a platform for investigating biology.</title>
        <authorList>
            <consortium name="The C. elegans sequencing consortium"/>
        </authorList>
    </citation>
    <scope>NUCLEOTIDE SEQUENCE [LARGE SCALE GENOMIC DNA]</scope>
    <source>
        <strain evidence="17">Bristol N2</strain>
    </source>
</reference>
<reference evidence="14" key="3">
    <citation type="journal article" date="2005" name="Curr. Biol.">
        <title>Inactivation of the autophagy gene bec-1 triggers apoptotic cell death in C. elegans.</title>
        <authorList>
            <person name="Takacs-Vellai K."/>
            <person name="Vellai T."/>
            <person name="Puoti A."/>
            <person name="Passannante M."/>
            <person name="Wicky C."/>
            <person name="Streit A."/>
            <person name="Kovacs A.L."/>
            <person name="Mueller F."/>
        </authorList>
    </citation>
    <scope>FUNCTION</scope>
    <scope>INTERACTION WITH BEC-1</scope>
</reference>
<reference evidence="14" key="4">
    <citation type="journal article" date="2005" name="Mol. Biol. Cell">
        <title>Genetic analysis of lysosomal trafficking in Caenorhabditis elegans.</title>
        <authorList>
            <person name="Hermann G.J."/>
            <person name="Schroeder L.K."/>
            <person name="Hieb C.A."/>
            <person name="Kershner A.M."/>
            <person name="Rabbitts B.M."/>
            <person name="Fonarev P."/>
            <person name="Grant B.D."/>
            <person name="Priess J.R."/>
        </authorList>
    </citation>
    <scope>FUNCTION</scope>
</reference>
<reference evidence="14" key="5">
    <citation type="journal article" date="2008" name="Nat. Cell Biol.">
        <title>A pathway for phagosome maturation during engulfment of apoptotic cells.</title>
        <authorList>
            <person name="Kinchen J.M."/>
            <person name="Doukoumetzidis K."/>
            <person name="Almendinger J."/>
            <person name="Stergiou L."/>
            <person name="Tosello-Trampont A."/>
            <person name="Sifri C.D."/>
            <person name="Hengartner M.O."/>
            <person name="Ravichandran K.S."/>
        </authorList>
    </citation>
    <scope>FUNCTION</scope>
    <scope>SUBCELLULAR LOCATION</scope>
    <scope>INTERACTION WITH DYN-1</scope>
    <scope>DISRUPTION PHENOTYPE</scope>
</reference>
<reference evidence="14" key="6">
    <citation type="journal article" date="2011" name="Autophagy">
        <title>The Atg6/Vps30/Beclin 1 ortholog BEC-1 mediates endocytic retrograde transport in addition to autophagy in C. elegans.</title>
        <authorList>
            <person name="Ruck A."/>
            <person name="Attonito J."/>
            <person name="Garces K.T."/>
            <person name="Nunez L."/>
            <person name="Palmisano N.J."/>
            <person name="Rubel Z."/>
            <person name="Bai Z."/>
            <person name="Nguyen K.C."/>
            <person name="Sun L."/>
            <person name="Grant B.D."/>
            <person name="Hall D.H."/>
            <person name="Melendez A."/>
        </authorList>
    </citation>
    <scope>FUNCTION</scope>
    <scope>DISRUPTION PHENOTYPE</scope>
</reference>
<reference evidence="14" key="7">
    <citation type="journal article" date="2012" name="PLoS Biol.">
        <title>Two PI 3-kinases and one PI 3-phosphatase together establish the cyclic waves of phagosomal PtdIns(3)P critical for the degradation of apoptotic cells.</title>
        <authorList>
            <person name="Lu N."/>
            <person name="Shen Q."/>
            <person name="Mahoney T.R."/>
            <person name="Neukomm L.J."/>
            <person name="Wang Y."/>
            <person name="Zhou Z."/>
        </authorList>
    </citation>
    <scope>FUNCTION</scope>
    <scope>DISRUPTION PHENOTYPE</scope>
</reference>
<reference key="8">
    <citation type="journal article" date="2016" name="J. Cell Biol.">
        <title>Negative regulation of phosphatidylinositol 3-phosphate levels in early-to-late endosome conversion.</title>
        <authorList>
            <person name="Liu K."/>
            <person name="Jian Y."/>
            <person name="Sun X."/>
            <person name="Yang C."/>
            <person name="Gao Z."/>
            <person name="Zhang Z."/>
            <person name="Liu X."/>
            <person name="Li Y."/>
            <person name="Xu J."/>
            <person name="Jing Y."/>
            <person name="Mitani S."/>
            <person name="He S."/>
            <person name="Yang C."/>
        </authorList>
    </citation>
    <scope>INTERACTION WITH BEC-1</scope>
</reference>
<reference key="9">
    <citation type="journal article" date="2016" name="J. Cell Biol.">
        <title>Correction: Negative regulation of phosphatidylinositol 3-phosphate levels in early-to-late endosome conversion.</title>
        <authorList>
            <person name="Liu K."/>
            <person name="Jian Y."/>
            <person name="Sun X."/>
            <person name="Yang C."/>
            <person name="Gao Z."/>
            <person name="Zhang Z."/>
            <person name="Liu X."/>
            <person name="Li Y."/>
            <person name="Xu J."/>
            <person name="Jing Y."/>
            <person name="Mitani S."/>
            <person name="He S."/>
            <person name="Yang C."/>
        </authorList>
    </citation>
    <scope>ERRATUM OF PUBMED:26783301</scope>
</reference>
<reference key="10">
    <citation type="journal article" date="2017" name="Curr. Biol.">
        <title>A Non-Cell-Autonomous Role of BEC-1/BECN1/Beclin1 in Coordinating Cell-Cycle Progression and Stem Cell Proliferation during Germline Development.</title>
        <authorList>
            <person name="Ames K."/>
            <person name="Da Cunha D.S."/>
            <person name="Gonzalez B."/>
            <person name="Konta M."/>
            <person name="Lin F."/>
            <person name="Shechter G."/>
            <person name="Starikov L."/>
            <person name="Wong S."/>
            <person name="Buelow H.E."/>
            <person name="Melendez A."/>
        </authorList>
    </citation>
    <scope>FUNCTION</scope>
    <scope>DISRUPTION PHENOTYPE</scope>
</reference>
<protein>
    <recommendedName>
        <fullName evidence="1">Phosphatidylinositol 3-kinase catalytic subunit type 3</fullName>
        <shortName evidence="1">PI3-kinase type 3</shortName>
        <shortName evidence="1">PI3K type 3</shortName>
        <ecNumber evidence="2 6">2.7.1.137</ecNumber>
    </recommendedName>
    <alternativeName>
        <fullName evidence="1">Phosphoinositide-3-kinase class 3</fullName>
    </alternativeName>
</protein>
<feature type="chain" id="PRO_0000436297" description="Phosphatidylinositol 3-kinase catalytic subunit type 3" evidence="14">
    <location>
        <begin position="1"/>
        <end position="901"/>
    </location>
</feature>
<feature type="domain" description="C2 PI3K-type" evidence="5">
    <location>
        <begin position="21"/>
        <end position="189"/>
    </location>
</feature>
<feature type="domain" description="PIK helical" evidence="4">
    <location>
        <begin position="302"/>
        <end position="527"/>
    </location>
</feature>
<feature type="domain" description="PI3K/PI4K catalytic" evidence="3">
    <location>
        <begin position="607"/>
        <end position="886"/>
    </location>
</feature>
<feature type="region of interest" description="G-loop" evidence="3">
    <location>
        <begin position="613"/>
        <end position="619"/>
    </location>
</feature>
<feature type="region of interest" description="Catalytic loop" evidence="3">
    <location>
        <begin position="755"/>
        <end position="763"/>
    </location>
</feature>
<feature type="region of interest" description="Activation loop" evidence="3">
    <location>
        <begin position="774"/>
        <end position="795"/>
    </location>
</feature>
<feature type="splice variant" id="VSP_058341" description="In isoform c." evidence="14">
    <location>
        <begin position="1"/>
        <end position="4"/>
    </location>
</feature>
<feature type="sequence conflict" description="In Ref. 1; CAA73142." evidence="14" ref="1">
    <original>T</original>
    <variation>R</variation>
    <location>
        <position position="8"/>
    </location>
</feature>
<feature type="sequence conflict" description="In Ref. 1; CAA73142." evidence="14" ref="1">
    <original>D</original>
    <variation>H</variation>
    <location>
        <position position="180"/>
    </location>
</feature>
<feature type="sequence conflict" description="In Ref. 1; CAA73142." evidence="14" ref="1">
    <original>P</original>
    <variation>A</variation>
    <location>
        <position position="220"/>
    </location>
</feature>
<feature type="sequence conflict" description="In Ref. 1; CAA73142." evidence="14" ref="1">
    <original>E</original>
    <variation>A</variation>
    <location>
        <position position="516"/>
    </location>
</feature>
<feature type="sequence conflict" description="In Ref. 1; CAA73142." evidence="14" ref="1">
    <original>D</original>
    <variation>H</variation>
    <location>
        <position position="526"/>
    </location>
</feature>
<feature type="sequence conflict" description="In Ref. 1; CAA73142." evidence="14" ref="1">
    <original>E</original>
    <variation>D</variation>
    <location>
        <position position="530"/>
    </location>
</feature>
<feature type="sequence conflict" description="In Ref. 1; CAA73142." evidence="14" ref="1">
    <original>E</original>
    <variation>A</variation>
    <location>
        <position position="641"/>
    </location>
</feature>
<feature type="sequence conflict" description="In Ref. 1; CAA73142." evidence="14" ref="1">
    <original>C</original>
    <variation>R</variation>
    <location>
        <position position="715"/>
    </location>
</feature>
<name>PK3C3_CAEEL</name>
<keyword id="KW-0025">Alternative splicing</keyword>
<keyword id="KW-0067">ATP-binding</keyword>
<keyword id="KW-0966">Cell projection</keyword>
<keyword id="KW-0963">Cytoplasm</keyword>
<keyword id="KW-0254">Endocytosis</keyword>
<keyword id="KW-0418">Kinase</keyword>
<keyword id="KW-0444">Lipid biosynthesis</keyword>
<keyword id="KW-0443">Lipid metabolism</keyword>
<keyword id="KW-0472">Membrane</keyword>
<keyword id="KW-0547">Nucleotide-binding</keyword>
<keyword id="KW-0539">Nucleus</keyword>
<keyword id="KW-0581">Phagocytosis</keyword>
<keyword id="KW-1185">Reference proteome</keyword>
<keyword id="KW-0808">Transferase</keyword>
<evidence type="ECO:0000250" key="1">
    <source>
        <dbReference type="UniProtKB" id="Q8NEB9"/>
    </source>
</evidence>
<evidence type="ECO:0000255" key="2">
    <source>
        <dbReference type="PIRNR" id="PIRNR000587"/>
    </source>
</evidence>
<evidence type="ECO:0000255" key="3">
    <source>
        <dbReference type="PROSITE-ProRule" id="PRU00269"/>
    </source>
</evidence>
<evidence type="ECO:0000255" key="4">
    <source>
        <dbReference type="PROSITE-ProRule" id="PRU00878"/>
    </source>
</evidence>
<evidence type="ECO:0000255" key="5">
    <source>
        <dbReference type="PROSITE-ProRule" id="PRU00880"/>
    </source>
</evidence>
<evidence type="ECO:0000269" key="6">
    <source>
    </source>
</evidence>
<evidence type="ECO:0000269" key="7">
    <source>
    </source>
</evidence>
<evidence type="ECO:0000269" key="8">
    <source>
    </source>
</evidence>
<evidence type="ECO:0000269" key="9">
    <source>
    </source>
</evidence>
<evidence type="ECO:0000269" key="10">
    <source>
    </source>
</evidence>
<evidence type="ECO:0000269" key="11">
    <source>
    </source>
</evidence>
<evidence type="ECO:0000269" key="12">
    <source>
    </source>
</evidence>
<evidence type="ECO:0000269" key="13">
    <source>
    </source>
</evidence>
<evidence type="ECO:0000305" key="14"/>
<evidence type="ECO:0000305" key="15">
    <source>
    </source>
</evidence>
<evidence type="ECO:0000312" key="16">
    <source>
        <dbReference type="EMBL" id="CAA73142.1"/>
    </source>
</evidence>
<evidence type="ECO:0000312" key="17">
    <source>
        <dbReference type="Proteomes" id="UP000001940"/>
    </source>
</evidence>
<evidence type="ECO:0000312" key="18">
    <source>
        <dbReference type="WormBase" id="B0025.1a"/>
    </source>
</evidence>
<evidence type="ECO:0000312" key="19">
    <source>
        <dbReference type="WormBase" id="B0025.1c"/>
    </source>
</evidence>
<gene>
    <name evidence="18" type="primary">vps-34</name>
    <name evidence="18" type="synonym">let-512</name>
    <name evidence="18" type="ORF">B0025.1</name>
</gene>
<organism evidence="17">
    <name type="scientific">Caenorhabditis elegans</name>
    <dbReference type="NCBI Taxonomy" id="6239"/>
    <lineage>
        <taxon>Eukaryota</taxon>
        <taxon>Metazoa</taxon>
        <taxon>Ecdysozoa</taxon>
        <taxon>Nematoda</taxon>
        <taxon>Chromadorea</taxon>
        <taxon>Rhabditida</taxon>
        <taxon>Rhabditina</taxon>
        <taxon>Rhabditomorpha</taxon>
        <taxon>Rhabditoidea</taxon>
        <taxon>Rhabditidae</taxon>
        <taxon>Peloderinae</taxon>
        <taxon>Caenorhabditis</taxon>
    </lineage>
</organism>